<name>RPB3_YEAST</name>
<accession>P16370</accession>
<accession>D6VVQ8</accession>
<proteinExistence type="evidence at protein level"/>
<evidence type="ECO:0000256" key="1">
    <source>
        <dbReference type="SAM" id="MobiDB-lite"/>
    </source>
</evidence>
<evidence type="ECO:0000269" key="2">
    <source>
    </source>
</evidence>
<evidence type="ECO:0000269" key="3">
    <source>
    </source>
</evidence>
<evidence type="ECO:0000269" key="4">
    <source>
    </source>
</evidence>
<evidence type="ECO:0000269" key="5">
    <source>
    </source>
</evidence>
<evidence type="ECO:0000269" key="6">
    <source>
    </source>
</evidence>
<evidence type="ECO:0000305" key="7"/>
<evidence type="ECO:0007744" key="8">
    <source>
    </source>
</evidence>
<evidence type="ECO:0007829" key="9">
    <source>
        <dbReference type="PDB" id="1TWF"/>
    </source>
</evidence>
<evidence type="ECO:0007829" key="10">
    <source>
        <dbReference type="PDB" id="3CQZ"/>
    </source>
</evidence>
<evidence type="ECO:0007829" key="11">
    <source>
        <dbReference type="PDB" id="7RIM"/>
    </source>
</evidence>
<evidence type="ECO:0007829" key="12">
    <source>
        <dbReference type="PDB" id="8JCH"/>
    </source>
</evidence>
<feature type="initiator methionine" description="Removed" evidence="8">
    <location>
        <position position="1"/>
    </location>
</feature>
<feature type="chain" id="PRO_0000132748" description="DNA-directed RNA polymerase II subunit RPB3">
    <location>
        <begin position="2"/>
        <end position="318"/>
    </location>
</feature>
<feature type="region of interest" description="Disordered" evidence="1">
    <location>
        <begin position="297"/>
        <end position="318"/>
    </location>
</feature>
<feature type="compositionally biased region" description="Polar residues" evidence="1">
    <location>
        <begin position="299"/>
        <end position="308"/>
    </location>
</feature>
<feature type="compositionally biased region" description="Gly residues" evidence="1">
    <location>
        <begin position="309"/>
        <end position="318"/>
    </location>
</feature>
<feature type="binding site">
    <location>
        <position position="86"/>
    </location>
    <ligand>
        <name>Zn(2+)</name>
        <dbReference type="ChEBI" id="CHEBI:29105"/>
    </ligand>
</feature>
<feature type="binding site">
    <location>
        <position position="88"/>
    </location>
    <ligand>
        <name>Zn(2+)</name>
        <dbReference type="ChEBI" id="CHEBI:29105"/>
    </ligand>
</feature>
<feature type="binding site">
    <location>
        <position position="92"/>
    </location>
    <ligand>
        <name>Zn(2+)</name>
        <dbReference type="ChEBI" id="CHEBI:29105"/>
    </ligand>
</feature>
<feature type="binding site">
    <location>
        <position position="95"/>
    </location>
    <ligand>
        <name>Zn(2+)</name>
        <dbReference type="ChEBI" id="CHEBI:29105"/>
    </ligand>
</feature>
<feature type="modified residue" description="N-acetylserine" evidence="8">
    <location>
        <position position="2"/>
    </location>
</feature>
<feature type="sequence variant" description="In mutant RPB3-1.">
    <original>A</original>
    <variation>D</variation>
    <location>
        <position position="30"/>
    </location>
</feature>
<feature type="mutagenesis site" description="Transcript termination readthrough." evidence="6">
    <original>K</original>
    <variation>E</variation>
    <location>
        <position position="9"/>
    </location>
</feature>
<feature type="sequence conflict" description="In Ref. 1; AAA34889." evidence="7" ref="1">
    <original>A</original>
    <variation>G</variation>
    <location>
        <position position="175"/>
    </location>
</feature>
<feature type="strand" evidence="9">
    <location>
        <begin position="5"/>
        <end position="7"/>
    </location>
</feature>
<feature type="strand" evidence="10">
    <location>
        <begin position="11"/>
        <end position="13"/>
    </location>
</feature>
<feature type="strand" evidence="9">
    <location>
        <begin position="15"/>
        <end position="18"/>
    </location>
</feature>
<feature type="strand" evidence="9">
    <location>
        <begin position="21"/>
        <end position="25"/>
    </location>
</feature>
<feature type="helix" evidence="9">
    <location>
        <begin position="27"/>
        <end position="39"/>
    </location>
</feature>
<feature type="strand" evidence="9">
    <location>
        <begin position="43"/>
        <end position="54"/>
    </location>
</feature>
<feature type="strand" evidence="9">
    <location>
        <begin position="56"/>
        <end position="58"/>
    </location>
</feature>
<feature type="helix" evidence="9">
    <location>
        <begin position="60"/>
        <end position="68"/>
    </location>
</feature>
<feature type="strand" evidence="9">
    <location>
        <begin position="72"/>
        <end position="74"/>
    </location>
</feature>
<feature type="helix" evidence="9">
    <location>
        <begin position="77"/>
        <end position="79"/>
    </location>
</feature>
<feature type="turn" evidence="9">
    <location>
        <begin position="83"/>
        <end position="85"/>
    </location>
</feature>
<feature type="strand" evidence="9">
    <location>
        <begin position="86"/>
        <end position="90"/>
    </location>
</feature>
<feature type="turn" evidence="9">
    <location>
        <begin position="93"/>
        <end position="95"/>
    </location>
</feature>
<feature type="strand" evidence="9">
    <location>
        <begin position="96"/>
        <end position="104"/>
    </location>
</feature>
<feature type="strand" evidence="9">
    <location>
        <begin position="107"/>
        <end position="109"/>
    </location>
</feature>
<feature type="strand" evidence="9">
    <location>
        <begin position="111"/>
        <end position="114"/>
    </location>
</feature>
<feature type="helix" evidence="9">
    <location>
        <begin position="115"/>
        <end position="117"/>
    </location>
</feature>
<feature type="strand" evidence="9">
    <location>
        <begin position="118"/>
        <end position="120"/>
    </location>
</feature>
<feature type="strand" evidence="9">
    <location>
        <begin position="128"/>
        <end position="132"/>
    </location>
</feature>
<feature type="strand" evidence="12">
    <location>
        <begin position="136"/>
        <end position="138"/>
    </location>
</feature>
<feature type="strand" evidence="9">
    <location>
        <begin position="142"/>
        <end position="147"/>
    </location>
</feature>
<feature type="strand" evidence="9">
    <location>
        <begin position="152"/>
        <end position="162"/>
    </location>
</feature>
<feature type="turn" evidence="9">
    <location>
        <begin position="164"/>
        <end position="166"/>
    </location>
</feature>
<feature type="helix" evidence="9">
    <location>
        <begin position="168"/>
        <end position="170"/>
    </location>
</feature>
<feature type="strand" evidence="9">
    <location>
        <begin position="173"/>
        <end position="180"/>
    </location>
</feature>
<feature type="strand" evidence="12">
    <location>
        <begin position="182"/>
        <end position="186"/>
    </location>
</feature>
<feature type="helix" evidence="9">
    <location>
        <begin position="197"/>
        <end position="200"/>
    </location>
</feature>
<feature type="helix" evidence="9">
    <location>
        <begin position="205"/>
        <end position="207"/>
    </location>
</feature>
<feature type="strand" evidence="11">
    <location>
        <begin position="208"/>
        <end position="210"/>
    </location>
</feature>
<feature type="strand" evidence="9">
    <location>
        <begin position="215"/>
        <end position="217"/>
    </location>
</feature>
<feature type="strand" evidence="9">
    <location>
        <begin position="228"/>
        <end position="234"/>
    </location>
</feature>
<feature type="strand" evidence="9">
    <location>
        <begin position="236"/>
        <end position="238"/>
    </location>
</feature>
<feature type="helix" evidence="9">
    <location>
        <begin position="240"/>
        <end position="265"/>
    </location>
</feature>
<comment type="function">
    <text evidence="6">DNA-dependent RNA polymerase catalyzes the transcription of DNA into RNA using the four ribonucleoside triphosphates as substrates. Component of RNA polymerase II which synthesizes mRNA precursors and many functional non-coding RNAs. Pol II is the central component of the basal RNA polymerase II transcription machinery. It is composed of mobile elements that move relative to each other. RPB3 is part of the core element with the central large cleft and the clamp element that moves to open and close the cleft. Seems to be involved in transcription termination.</text>
</comment>
<comment type="subunit">
    <text evidence="2 3 5">Component of the RNA polymerase II (Pol II) complex consisting of 12 subunits.</text>
</comment>
<comment type="interaction">
    <interactant intactId="EBI-15773">
        <id>P16370</id>
    </interactant>
    <interactant intactId="EBI-12855">
        <id>P38351</id>
        <label>PAF1</label>
    </interactant>
    <organismsDiffer>false</organismsDiffer>
    <experiments>2</experiments>
</comment>
<comment type="interaction">
    <interactant intactId="EBI-15773">
        <id>P16370</id>
    </interactant>
    <interactant intactId="EBI-15806">
        <id>P38902</id>
        <label>RPB11</label>
    </interactant>
    <organismsDiffer>false</organismsDiffer>
    <experiments>5</experiments>
</comment>
<comment type="interaction">
    <interactant intactId="EBI-15773">
        <id>P16370</id>
    </interactant>
    <interactant intactId="EBI-15767">
        <id>P08518</id>
        <label>RPB2</label>
    </interactant>
    <organismsDiffer>false</organismsDiffer>
    <experiments>6</experiments>
</comment>
<comment type="interaction">
    <interactant intactId="EBI-15773">
        <id>P16370</id>
    </interactant>
    <interactant intactId="EBI-32596">
        <id>Q06505</id>
        <label>SPN1</label>
    </interactant>
    <organismsDiffer>false</organismsDiffer>
    <experiments>2</experiments>
</comment>
<comment type="subcellular location">
    <subcellularLocation>
        <location>Nucleus</location>
    </subcellularLocation>
</comment>
<comment type="miscellaneous">
    <text evidence="4">Present with 10000 molecules/cell in log phase SD medium.</text>
</comment>
<comment type="similarity">
    <text evidence="7">Belongs to the archaeal Rpo3/eukaryotic RPB3 RNA polymerase subunit family.</text>
</comment>
<keyword id="KW-0002">3D-structure</keyword>
<keyword id="KW-0007">Acetylation</keyword>
<keyword id="KW-0903">Direct protein sequencing</keyword>
<keyword id="KW-0240">DNA-directed RNA polymerase</keyword>
<keyword id="KW-0479">Metal-binding</keyword>
<keyword id="KW-0539">Nucleus</keyword>
<keyword id="KW-1185">Reference proteome</keyword>
<keyword id="KW-0804">Transcription</keyword>
<keyword id="KW-0862">Zinc</keyword>
<gene>
    <name type="primary">RPB3</name>
    <name type="ordered locus">YIL021W</name>
</gene>
<reference key="1">
    <citation type="journal article" date="1989" name="Mol. Cell. Biol.">
        <title>RNA polymerase II subunit RPB3 is an essential component of the mRNA transcription apparatus.</title>
        <authorList>
            <person name="Kolodziej P."/>
            <person name="Young R.A."/>
        </authorList>
    </citation>
    <scope>NUCLEOTIDE SEQUENCE [GENOMIC DNA]</scope>
    <scope>PROTEIN SEQUENCE OF 206-223</scope>
</reference>
<reference key="2">
    <citation type="journal article" date="1997" name="Nature">
        <title>The nucleotide sequence of Saccharomyces cerevisiae chromosome IX.</title>
        <authorList>
            <person name="Churcher C.M."/>
            <person name="Bowman S."/>
            <person name="Badcock K."/>
            <person name="Bankier A.T."/>
            <person name="Brown D."/>
            <person name="Chillingworth T."/>
            <person name="Connor R."/>
            <person name="Devlin K."/>
            <person name="Gentles S."/>
            <person name="Hamlin N."/>
            <person name="Harris D.E."/>
            <person name="Horsnell T."/>
            <person name="Hunt S."/>
            <person name="Jagels K."/>
            <person name="Jones M."/>
            <person name="Lye G."/>
            <person name="Moule S."/>
            <person name="Odell C."/>
            <person name="Pearson D."/>
            <person name="Rajandream M.A."/>
            <person name="Rice P."/>
            <person name="Rowley N."/>
            <person name="Skelton J."/>
            <person name="Smith V."/>
            <person name="Walsh S.V."/>
            <person name="Whitehead S."/>
            <person name="Barrell B.G."/>
        </authorList>
    </citation>
    <scope>NUCLEOTIDE SEQUENCE [LARGE SCALE GENOMIC DNA]</scope>
    <source>
        <strain>ATCC 204508 / S288c</strain>
    </source>
</reference>
<reference key="3">
    <citation type="journal article" date="2014" name="G3 (Bethesda)">
        <title>The reference genome sequence of Saccharomyces cerevisiae: Then and now.</title>
        <authorList>
            <person name="Engel S.R."/>
            <person name="Dietrich F.S."/>
            <person name="Fisk D.G."/>
            <person name="Binkley G."/>
            <person name="Balakrishnan R."/>
            <person name="Costanzo M.C."/>
            <person name="Dwight S.S."/>
            <person name="Hitz B.C."/>
            <person name="Karra K."/>
            <person name="Nash R.S."/>
            <person name="Weng S."/>
            <person name="Wong E.D."/>
            <person name="Lloyd P."/>
            <person name="Skrzypek M.S."/>
            <person name="Miyasato S.R."/>
            <person name="Simison M."/>
            <person name="Cherry J.M."/>
        </authorList>
    </citation>
    <scope>GENOME REANNOTATION</scope>
    <source>
        <strain>ATCC 204508 / S288c</strain>
    </source>
</reference>
<reference key="4">
    <citation type="journal article" date="2003" name="Nature">
        <title>Global analysis of protein expression in yeast.</title>
        <authorList>
            <person name="Ghaemmaghami S."/>
            <person name="Huh W.-K."/>
            <person name="Bower K."/>
            <person name="Howson R.W."/>
            <person name="Belle A."/>
            <person name="Dephoure N."/>
            <person name="O'Shea E.K."/>
            <person name="Weissman J.S."/>
        </authorList>
    </citation>
    <scope>LEVEL OF PROTEIN EXPRESSION [LARGE SCALE ANALYSIS]</scope>
</reference>
<reference key="5">
    <citation type="journal article" date="2006" name="Mol. Cell. Biol.">
        <title>cis- and trans-Acting determinants of transcription termination by yeast RNA polymerase II.</title>
        <authorList>
            <person name="Steinmetz E.J."/>
            <person name="Ng S.B."/>
            <person name="Cloute J.P."/>
            <person name="Brow D.A."/>
        </authorList>
    </citation>
    <scope>FUNCTION</scope>
    <scope>MUTAGENESIS OF LYS-9</scope>
</reference>
<reference key="6">
    <citation type="journal article" date="2012" name="Proc. Natl. Acad. Sci. U.S.A.">
        <title>N-terminal acetylome analyses and functional insights of the N-terminal acetyltransferase NatB.</title>
        <authorList>
            <person name="Van Damme P."/>
            <person name="Lasa M."/>
            <person name="Polevoda B."/>
            <person name="Gazquez C."/>
            <person name="Elosegui-Artola A."/>
            <person name="Kim D.S."/>
            <person name="De Juan-Pardo E."/>
            <person name="Demeyer K."/>
            <person name="Hole K."/>
            <person name="Larrea E."/>
            <person name="Timmerman E."/>
            <person name="Prieto J."/>
            <person name="Arnesen T."/>
            <person name="Sherman F."/>
            <person name="Gevaert K."/>
            <person name="Aldabe R."/>
        </authorList>
    </citation>
    <scope>ACETYLATION [LARGE SCALE ANALYSIS] AT SER-2</scope>
    <scope>CLEAVAGE OF INITIATOR METHIONINE [LARGE SCALE ANALYSIS]</scope>
    <scope>IDENTIFICATION BY MASS SPECTROMETRY [LARGE SCALE ANALYSIS]</scope>
</reference>
<reference key="7">
    <citation type="journal article" date="2003" name="Mol. Cell">
        <title>RNA polymerase II/TFIIF structure and conserved organization of the initiation complex.</title>
        <authorList>
            <person name="Chung W.H."/>
            <person name="Craighead J.L."/>
            <person name="Chang W.H."/>
            <person name="Ezeokonkwo C."/>
            <person name="Bareket-Samish A."/>
            <person name="Kornberg R.D."/>
            <person name="Asturias F.J."/>
        </authorList>
    </citation>
    <scope>ELECTRON MICROSCOPY OF THE RNA POL II/TFIIF COMPLEX</scope>
</reference>
<reference key="8">
    <citation type="journal article" date="2001" name="Science">
        <title>Structural basis of transcription: RNA polymerase II at 2.8 A resolution.</title>
        <authorList>
            <person name="Cramer P."/>
            <person name="Bushnell D.A."/>
            <person name="Kornberg R.D."/>
        </authorList>
    </citation>
    <scope>X-RAY CRYSTALLOGRAPHY (2.8 ANGSTROMS) OF THE RNA POL II CORE COMPLEX</scope>
</reference>
<reference key="9">
    <citation type="journal article" date="2001" name="Science">
        <title>Structural basis of transcription: an RNA polymerase II elongation complex at 3.3 A resolution.</title>
        <authorList>
            <person name="Gnatt A.L."/>
            <person name="Cramer P."/>
            <person name="Fu J."/>
            <person name="Bushnell D.A."/>
            <person name="Kornberg R.D."/>
        </authorList>
    </citation>
    <scope>X-RAY CRYSTALLOGRAPHY (3.3 ANGSTROMS) OF THE RNA POL II CORE COMPLEX</scope>
</reference>
<reference key="10">
    <citation type="journal article" date="2002" name="Proc. Natl. Acad. Sci. U.S.A.">
        <title>Structural basis of transcription: alpha-amanitin-RNA polymerase II cocrystal at 2.8 A resolution.</title>
        <authorList>
            <person name="Bushnell D.A."/>
            <person name="Cramer P."/>
            <person name="Kornberg R.D."/>
        </authorList>
    </citation>
    <scope>X-RAY CRYSTALLOGRAPHY (2.8 ANGSTROMS) OF THE RNA POL II CORE COMPLEX IN COMPLEX WITH ALPHA-AMANITIN</scope>
</reference>
<reference key="11">
    <citation type="journal article" date="2003" name="Cell">
        <title>Architecture of the RNA polymerase II-TFIIS complex and implications for mRNA cleavage.</title>
        <authorList>
            <person name="Kettenberger H."/>
            <person name="Armache K.J."/>
            <person name="Cramer P."/>
        </authorList>
    </citation>
    <scope>X-RAY CRYSTALLOGRAPHY (3.8 ANGSTROMS) OF THE RNA POL II COMPLEX IN COMPLEX WITH DST1</scope>
</reference>
<reference key="12">
    <citation type="journal article" date="2003" name="Proc. Natl. Acad. Sci. U.S.A.">
        <title>Architecture of initiation-competent 12-subunit RNA polymerase II.</title>
        <authorList>
            <person name="Armache K.J."/>
            <person name="Kettenberger H."/>
            <person name="Cramer P."/>
        </authorList>
    </citation>
    <scope>X-RAY CRYSTALLOGRAPHY (4.2 ANGSTROMS) OF THE RNA POL II COMPLEX</scope>
</reference>
<reference key="13">
    <citation type="journal article" date="2003" name="Proc. Natl. Acad. Sci. U.S.A.">
        <title>Complete, 12-subunit RNA polymerase II at 4.1-A resolution: implications for the initiation of transcription.</title>
        <authorList>
            <person name="Bushnell D.A."/>
            <person name="Kornberg R.D."/>
        </authorList>
    </citation>
    <scope>X-RAY CRYSTALLOGRAPHY (4.1 ANGSTROMS) OF THE RNA POL II CORE COMPLEX</scope>
</reference>
<reference key="14">
    <citation type="journal article" date="2004" name="Cell">
        <title>Structural basis of transcription: nucleotide selection by rotation in the RNA polymerase II active center.</title>
        <authorList>
            <person name="Westover K.D."/>
            <person name="Bushnell D.A."/>
            <person name="Kornberg R.D."/>
        </authorList>
    </citation>
    <scope>X-RAY CRYSTALLOGRAPHY (2.3 ANGSTROMS) OF THE RNA POL II CORE COMPLEX</scope>
</reference>
<reference key="15">
    <citation type="journal article" date="2004" name="Mol. Cell">
        <title>Complete RNA polymerase II elongation complex structure and its interactions with NTP and TFIIS.</title>
        <authorList>
            <person name="Kettenberger H."/>
            <person name="Armache K.J."/>
            <person name="Cramer P."/>
        </authorList>
    </citation>
    <scope>X-RAY CRYSTALLOGRAPHY (4.5 ANGSTROMS)</scope>
</reference>
<reference key="16">
    <citation type="journal article" date="2004" name="Science">
        <title>Structural basis of transcription: an RNA polymerase II-TFIIB cocrystal at 4.5 Angstroms.</title>
        <authorList>
            <person name="Bushnell D.A."/>
            <person name="Westover K.D."/>
            <person name="Davis R.E."/>
            <person name="Kornberg R.D."/>
        </authorList>
    </citation>
    <scope>X-RAY CRYSTALLOGRAPHY (4.5 ANGSTROMS) OF THE RNA POL II CORE COMPLEX</scope>
</reference>
<reference key="17">
    <citation type="journal article" date="2005" name="J. Biol. Chem.">
        <title>Structures of complete RNA polymerase II and its subcomplex, Rpb4/7.</title>
        <authorList>
            <person name="Armache K.J."/>
            <person name="Mitterweger S."/>
            <person name="Meinhart A."/>
            <person name="Cramer P."/>
        </authorList>
    </citation>
    <scope>X-RAY CRYSTALLOGRAPHY (3.8 ANGSTROMS) OF THE RNA POL II COMPLEX</scope>
</reference>
<reference key="18">
    <citation type="journal article" date="2006" name="Nat. Struct. Mol. Biol.">
        <title>Structure of an RNA polymerase II-RNA inhibitor complex elucidates transcription regulation by noncoding RNAs.</title>
        <authorList>
            <person name="Kettenberger H."/>
            <person name="Eisenfuhr A."/>
            <person name="Brueckner F."/>
            <person name="Theis M."/>
            <person name="Famulok M."/>
            <person name="Cramer P."/>
        </authorList>
    </citation>
    <scope>X-RAY CRYSTALLOGRAPHY (3.8 ANGSTROMS) OF THE RNA POL II COMPLEX IN COMPLEX WITH INHIBITING NON-CODING RNA</scope>
</reference>
<reference key="19">
    <citation type="journal article" date="2006" name="Structure">
        <title>Phasing RNA polymerase II using intrinsically bound Zn atoms: an updated structural model.</title>
        <authorList>
            <person name="Meyer P.A."/>
            <person name="Ye P."/>
            <person name="Zhang M."/>
            <person name="Suh M.H."/>
            <person name="Fu J."/>
        </authorList>
    </citation>
    <scope>X-RAY CRYSTALLOGRAPHY (4.15 ANGSTROMS) OF THE RNA POL II COMPLEX</scope>
</reference>
<dbReference type="EMBL" id="Z46881">
    <property type="protein sequence ID" value="CAA86971.1"/>
    <property type="molecule type" value="Genomic_DNA"/>
</dbReference>
<dbReference type="EMBL" id="M27496">
    <property type="protein sequence ID" value="AAA34889.1"/>
    <property type="molecule type" value="Genomic_DNA"/>
</dbReference>
<dbReference type="EMBL" id="BK006942">
    <property type="protein sequence ID" value="DAA08524.1"/>
    <property type="molecule type" value="Genomic_DNA"/>
</dbReference>
<dbReference type="PIR" id="S49961">
    <property type="entry name" value="S49961"/>
</dbReference>
<dbReference type="RefSeq" id="NP_012243.3">
    <property type="nucleotide sequence ID" value="NM_001179371.3"/>
</dbReference>
<dbReference type="PDB" id="1I3Q">
    <property type="method" value="X-ray"/>
    <property type="resolution" value="3.10 A"/>
    <property type="chains" value="C=1-318"/>
</dbReference>
<dbReference type="PDB" id="1I50">
    <property type="method" value="X-ray"/>
    <property type="resolution" value="2.80 A"/>
    <property type="chains" value="C=1-318"/>
</dbReference>
<dbReference type="PDB" id="1I6H">
    <property type="method" value="X-ray"/>
    <property type="resolution" value="3.30 A"/>
    <property type="chains" value="C=1-318"/>
</dbReference>
<dbReference type="PDB" id="1K83">
    <property type="method" value="X-ray"/>
    <property type="resolution" value="2.80 A"/>
    <property type="chains" value="C=1-318"/>
</dbReference>
<dbReference type="PDB" id="1NIK">
    <property type="method" value="X-ray"/>
    <property type="resolution" value="4.10 A"/>
    <property type="chains" value="C=1-318"/>
</dbReference>
<dbReference type="PDB" id="1NT9">
    <property type="method" value="X-ray"/>
    <property type="resolution" value="4.20 A"/>
    <property type="chains" value="C=1-318"/>
</dbReference>
<dbReference type="PDB" id="1PQV">
    <property type="method" value="X-ray"/>
    <property type="resolution" value="3.80 A"/>
    <property type="chains" value="C=1-318"/>
</dbReference>
<dbReference type="PDB" id="1R5U">
    <property type="method" value="X-ray"/>
    <property type="resolution" value="4.50 A"/>
    <property type="chains" value="C=1-318"/>
</dbReference>
<dbReference type="PDB" id="1R9S">
    <property type="method" value="X-ray"/>
    <property type="resolution" value="4.25 A"/>
    <property type="chains" value="C=1-318"/>
</dbReference>
<dbReference type="PDB" id="1R9T">
    <property type="method" value="X-ray"/>
    <property type="resolution" value="3.50 A"/>
    <property type="chains" value="C=1-318"/>
</dbReference>
<dbReference type="PDB" id="1SFO">
    <property type="method" value="X-ray"/>
    <property type="resolution" value="3.61 A"/>
    <property type="chains" value="C=1-318"/>
</dbReference>
<dbReference type="PDB" id="1TWA">
    <property type="method" value="X-ray"/>
    <property type="resolution" value="3.20 A"/>
    <property type="chains" value="C=1-318"/>
</dbReference>
<dbReference type="PDB" id="1TWC">
    <property type="method" value="X-ray"/>
    <property type="resolution" value="3.00 A"/>
    <property type="chains" value="C=1-318"/>
</dbReference>
<dbReference type="PDB" id="1TWF">
    <property type="method" value="X-ray"/>
    <property type="resolution" value="2.30 A"/>
    <property type="chains" value="C=1-318"/>
</dbReference>
<dbReference type="PDB" id="1TWG">
    <property type="method" value="X-ray"/>
    <property type="resolution" value="3.30 A"/>
    <property type="chains" value="C=1-318"/>
</dbReference>
<dbReference type="PDB" id="1TWH">
    <property type="method" value="X-ray"/>
    <property type="resolution" value="3.40 A"/>
    <property type="chains" value="C=1-318"/>
</dbReference>
<dbReference type="PDB" id="1WCM">
    <property type="method" value="X-ray"/>
    <property type="resolution" value="3.80 A"/>
    <property type="chains" value="C=1-318"/>
</dbReference>
<dbReference type="PDB" id="1Y1V">
    <property type="method" value="X-ray"/>
    <property type="resolution" value="3.80 A"/>
    <property type="chains" value="C=1-318"/>
</dbReference>
<dbReference type="PDB" id="1Y1W">
    <property type="method" value="X-ray"/>
    <property type="resolution" value="4.00 A"/>
    <property type="chains" value="C=1-318"/>
</dbReference>
<dbReference type="PDB" id="1Y1Y">
    <property type="method" value="X-ray"/>
    <property type="resolution" value="4.00 A"/>
    <property type="chains" value="C=1-318"/>
</dbReference>
<dbReference type="PDB" id="1Y77">
    <property type="method" value="X-ray"/>
    <property type="resolution" value="4.50 A"/>
    <property type="chains" value="C=1-318"/>
</dbReference>
<dbReference type="PDB" id="2B63">
    <property type="method" value="X-ray"/>
    <property type="resolution" value="3.80 A"/>
    <property type="chains" value="C=1-318"/>
</dbReference>
<dbReference type="PDB" id="2B8K">
    <property type="method" value="X-ray"/>
    <property type="resolution" value="4.15 A"/>
    <property type="chains" value="C=1-318"/>
</dbReference>
<dbReference type="PDB" id="2E2H">
    <property type="method" value="X-ray"/>
    <property type="resolution" value="3.95 A"/>
    <property type="chains" value="C=1-318"/>
</dbReference>
<dbReference type="PDB" id="2E2I">
    <property type="method" value="X-ray"/>
    <property type="resolution" value="3.41 A"/>
    <property type="chains" value="C=1-318"/>
</dbReference>
<dbReference type="PDB" id="2E2J">
    <property type="method" value="X-ray"/>
    <property type="resolution" value="3.50 A"/>
    <property type="chains" value="C=1-318"/>
</dbReference>
<dbReference type="PDB" id="2JA5">
    <property type="method" value="X-ray"/>
    <property type="resolution" value="3.80 A"/>
    <property type="chains" value="C=1-318"/>
</dbReference>
<dbReference type="PDB" id="2JA6">
    <property type="method" value="X-ray"/>
    <property type="resolution" value="4.00 A"/>
    <property type="chains" value="C=1-318"/>
</dbReference>
<dbReference type="PDB" id="2JA7">
    <property type="method" value="X-ray"/>
    <property type="resolution" value="3.80 A"/>
    <property type="chains" value="C/O=1-318"/>
</dbReference>
<dbReference type="PDB" id="2JA8">
    <property type="method" value="X-ray"/>
    <property type="resolution" value="3.80 A"/>
    <property type="chains" value="C=1-318"/>
</dbReference>
<dbReference type="PDB" id="2NVQ">
    <property type="method" value="X-ray"/>
    <property type="resolution" value="2.90 A"/>
    <property type="chains" value="C=1-318"/>
</dbReference>
<dbReference type="PDB" id="2NVT">
    <property type="method" value="X-ray"/>
    <property type="resolution" value="3.36 A"/>
    <property type="chains" value="C=1-318"/>
</dbReference>
<dbReference type="PDB" id="2NVX">
    <property type="method" value="X-ray"/>
    <property type="resolution" value="3.60 A"/>
    <property type="chains" value="C=1-318"/>
</dbReference>
<dbReference type="PDB" id="2NVY">
    <property type="method" value="X-ray"/>
    <property type="resolution" value="3.40 A"/>
    <property type="chains" value="C=1-318"/>
</dbReference>
<dbReference type="PDB" id="2NVZ">
    <property type="method" value="X-ray"/>
    <property type="resolution" value="4.30 A"/>
    <property type="chains" value="C=1-318"/>
</dbReference>
<dbReference type="PDB" id="2R7Z">
    <property type="method" value="X-ray"/>
    <property type="resolution" value="3.80 A"/>
    <property type="chains" value="C=1-318"/>
</dbReference>
<dbReference type="PDB" id="2R92">
    <property type="method" value="X-ray"/>
    <property type="resolution" value="3.80 A"/>
    <property type="chains" value="C=1-318"/>
</dbReference>
<dbReference type="PDB" id="2R93">
    <property type="method" value="X-ray"/>
    <property type="resolution" value="4.00 A"/>
    <property type="chains" value="C=1-318"/>
</dbReference>
<dbReference type="PDB" id="2VUM">
    <property type="method" value="X-ray"/>
    <property type="resolution" value="3.40 A"/>
    <property type="chains" value="C=1-318"/>
</dbReference>
<dbReference type="PDB" id="2YU9">
    <property type="method" value="X-ray"/>
    <property type="resolution" value="3.40 A"/>
    <property type="chains" value="C=1-318"/>
</dbReference>
<dbReference type="PDB" id="3CQZ">
    <property type="method" value="X-ray"/>
    <property type="resolution" value="2.80 A"/>
    <property type="chains" value="C=1-318"/>
</dbReference>
<dbReference type="PDB" id="3FKI">
    <property type="method" value="X-ray"/>
    <property type="resolution" value="3.88 A"/>
    <property type="chains" value="C=1-318"/>
</dbReference>
<dbReference type="PDB" id="3GTG">
    <property type="method" value="X-ray"/>
    <property type="resolution" value="3.78 A"/>
    <property type="chains" value="C=1-318"/>
</dbReference>
<dbReference type="PDB" id="3GTJ">
    <property type="method" value="X-ray"/>
    <property type="resolution" value="3.42 A"/>
    <property type="chains" value="C=1-318"/>
</dbReference>
<dbReference type="PDB" id="3GTK">
    <property type="method" value="X-ray"/>
    <property type="resolution" value="3.80 A"/>
    <property type="chains" value="C=1-318"/>
</dbReference>
<dbReference type="PDB" id="3GTL">
    <property type="method" value="X-ray"/>
    <property type="resolution" value="3.38 A"/>
    <property type="chains" value="C=1-318"/>
</dbReference>
<dbReference type="PDB" id="3GTM">
    <property type="method" value="X-ray"/>
    <property type="resolution" value="3.80 A"/>
    <property type="chains" value="C=1-318"/>
</dbReference>
<dbReference type="PDB" id="3GTO">
    <property type="method" value="X-ray"/>
    <property type="resolution" value="4.00 A"/>
    <property type="chains" value="C=1-318"/>
</dbReference>
<dbReference type="PDB" id="3GTP">
    <property type="method" value="X-ray"/>
    <property type="resolution" value="3.90 A"/>
    <property type="chains" value="C=1-318"/>
</dbReference>
<dbReference type="PDB" id="3GTQ">
    <property type="method" value="X-ray"/>
    <property type="resolution" value="3.80 A"/>
    <property type="chains" value="C=1-318"/>
</dbReference>
<dbReference type="PDB" id="3H3V">
    <property type="method" value="X-ray"/>
    <property type="resolution" value="4.00 A"/>
    <property type="chains" value="D=1-318"/>
</dbReference>
<dbReference type="PDB" id="3HOU">
    <property type="method" value="X-ray"/>
    <property type="resolution" value="3.20 A"/>
    <property type="chains" value="C/O=1-318"/>
</dbReference>
<dbReference type="PDB" id="3HOV">
    <property type="method" value="X-ray"/>
    <property type="resolution" value="3.50 A"/>
    <property type="chains" value="C=1-318"/>
</dbReference>
<dbReference type="PDB" id="3HOW">
    <property type="method" value="X-ray"/>
    <property type="resolution" value="3.60 A"/>
    <property type="chains" value="C=2-318"/>
</dbReference>
<dbReference type="PDB" id="3HOX">
    <property type="method" value="X-ray"/>
    <property type="resolution" value="3.65 A"/>
    <property type="chains" value="C=2-318"/>
</dbReference>
<dbReference type="PDB" id="3HOY">
    <property type="method" value="X-ray"/>
    <property type="resolution" value="3.40 A"/>
    <property type="chains" value="C=2-318"/>
</dbReference>
<dbReference type="PDB" id="3HOZ">
    <property type="method" value="X-ray"/>
    <property type="resolution" value="3.65 A"/>
    <property type="chains" value="C=2-318"/>
</dbReference>
<dbReference type="PDB" id="3I4M">
    <property type="method" value="X-ray"/>
    <property type="resolution" value="3.70 A"/>
    <property type="chains" value="C=1-318"/>
</dbReference>
<dbReference type="PDB" id="3I4N">
    <property type="method" value="X-ray"/>
    <property type="resolution" value="3.90 A"/>
    <property type="chains" value="C=1-318"/>
</dbReference>
<dbReference type="PDB" id="3J0K">
    <property type="method" value="EM"/>
    <property type="resolution" value="36.00 A"/>
    <property type="chains" value="C=1-268"/>
</dbReference>
<dbReference type="PDB" id="3J1N">
    <property type="method" value="EM"/>
    <property type="resolution" value="16.00 A"/>
    <property type="chains" value="C=1-268"/>
</dbReference>
<dbReference type="PDB" id="3K1F">
    <property type="method" value="X-ray"/>
    <property type="resolution" value="4.30 A"/>
    <property type="chains" value="C=1-318"/>
</dbReference>
<dbReference type="PDB" id="3K7A">
    <property type="method" value="X-ray"/>
    <property type="resolution" value="3.80 A"/>
    <property type="chains" value="C=1-318"/>
</dbReference>
<dbReference type="PDB" id="3M3Y">
    <property type="method" value="X-ray"/>
    <property type="resolution" value="3.18 A"/>
    <property type="chains" value="C=1-318"/>
</dbReference>
<dbReference type="PDB" id="3M4O">
    <property type="method" value="X-ray"/>
    <property type="resolution" value="3.57 A"/>
    <property type="chains" value="C=1-318"/>
</dbReference>
<dbReference type="PDB" id="3PO2">
    <property type="method" value="X-ray"/>
    <property type="resolution" value="3.30 A"/>
    <property type="chains" value="C=1-318"/>
</dbReference>
<dbReference type="PDB" id="3PO3">
    <property type="method" value="X-ray"/>
    <property type="resolution" value="3.30 A"/>
    <property type="chains" value="C=1-318"/>
</dbReference>
<dbReference type="PDB" id="3QT1">
    <property type="method" value="X-ray"/>
    <property type="resolution" value="4.30 A"/>
    <property type="chains" value="C=1-318"/>
</dbReference>
<dbReference type="PDB" id="3RZD">
    <property type="method" value="X-ray"/>
    <property type="resolution" value="3.30 A"/>
    <property type="chains" value="C=1-318"/>
</dbReference>
<dbReference type="PDB" id="3RZO">
    <property type="method" value="X-ray"/>
    <property type="resolution" value="3.00 A"/>
    <property type="chains" value="C=1-318"/>
</dbReference>
<dbReference type="PDB" id="3S14">
    <property type="method" value="X-ray"/>
    <property type="resolution" value="2.85 A"/>
    <property type="chains" value="C=1-318"/>
</dbReference>
<dbReference type="PDB" id="3S15">
    <property type="method" value="X-ray"/>
    <property type="resolution" value="3.30 A"/>
    <property type="chains" value="C=1-318"/>
</dbReference>
<dbReference type="PDB" id="3S16">
    <property type="method" value="X-ray"/>
    <property type="resolution" value="3.24 A"/>
    <property type="chains" value="C=1-318"/>
</dbReference>
<dbReference type="PDB" id="3S17">
    <property type="method" value="X-ray"/>
    <property type="resolution" value="3.20 A"/>
    <property type="chains" value="C=1-318"/>
</dbReference>
<dbReference type="PDB" id="3S1M">
    <property type="method" value="X-ray"/>
    <property type="resolution" value="3.13 A"/>
    <property type="chains" value="C=1-318"/>
</dbReference>
<dbReference type="PDB" id="3S1N">
    <property type="method" value="X-ray"/>
    <property type="resolution" value="3.10 A"/>
    <property type="chains" value="C=1-318"/>
</dbReference>
<dbReference type="PDB" id="3S1Q">
    <property type="method" value="X-ray"/>
    <property type="resolution" value="3.30 A"/>
    <property type="chains" value="C=1-318"/>
</dbReference>
<dbReference type="PDB" id="3S1R">
    <property type="method" value="X-ray"/>
    <property type="resolution" value="3.20 A"/>
    <property type="chains" value="C=1-318"/>
</dbReference>
<dbReference type="PDB" id="3S2D">
    <property type="method" value="X-ray"/>
    <property type="resolution" value="3.20 A"/>
    <property type="chains" value="C=1-318"/>
</dbReference>
<dbReference type="PDB" id="3S2H">
    <property type="method" value="X-ray"/>
    <property type="resolution" value="3.30 A"/>
    <property type="chains" value="C=1-318"/>
</dbReference>
<dbReference type="PDB" id="4A3B">
    <property type="method" value="X-ray"/>
    <property type="resolution" value="3.50 A"/>
    <property type="chains" value="C=1-318"/>
</dbReference>
<dbReference type="PDB" id="4A3C">
    <property type="method" value="X-ray"/>
    <property type="resolution" value="3.50 A"/>
    <property type="chains" value="C=1-318"/>
</dbReference>
<dbReference type="PDB" id="4A3D">
    <property type="method" value="X-ray"/>
    <property type="resolution" value="3.40 A"/>
    <property type="chains" value="C=1-318"/>
</dbReference>
<dbReference type="PDB" id="4A3E">
    <property type="method" value="X-ray"/>
    <property type="resolution" value="3.40 A"/>
    <property type="chains" value="C=1-318"/>
</dbReference>
<dbReference type="PDB" id="4A3F">
    <property type="method" value="X-ray"/>
    <property type="resolution" value="3.50 A"/>
    <property type="chains" value="C=1-318"/>
</dbReference>
<dbReference type="PDB" id="4A3G">
    <property type="method" value="X-ray"/>
    <property type="resolution" value="3.50 A"/>
    <property type="chains" value="C=1-318"/>
</dbReference>
<dbReference type="PDB" id="4A3I">
    <property type="method" value="X-ray"/>
    <property type="resolution" value="3.80 A"/>
    <property type="chains" value="C=1-318"/>
</dbReference>
<dbReference type="PDB" id="4A3J">
    <property type="method" value="X-ray"/>
    <property type="resolution" value="3.70 A"/>
    <property type="chains" value="C=1-318"/>
</dbReference>
<dbReference type="PDB" id="4A3K">
    <property type="method" value="X-ray"/>
    <property type="resolution" value="3.50 A"/>
    <property type="chains" value="C=1-318"/>
</dbReference>
<dbReference type="PDB" id="4A3L">
    <property type="method" value="X-ray"/>
    <property type="resolution" value="3.50 A"/>
    <property type="chains" value="C=1-318"/>
</dbReference>
<dbReference type="PDB" id="4A3M">
    <property type="method" value="X-ray"/>
    <property type="resolution" value="3.90 A"/>
    <property type="chains" value="C=1-318"/>
</dbReference>
<dbReference type="PDB" id="4A93">
    <property type="method" value="X-ray"/>
    <property type="resolution" value="3.40 A"/>
    <property type="chains" value="C=1-318"/>
</dbReference>
<dbReference type="PDB" id="4BBR">
    <property type="method" value="X-ray"/>
    <property type="resolution" value="3.40 A"/>
    <property type="chains" value="C=1-318"/>
</dbReference>
<dbReference type="PDB" id="4BBS">
    <property type="method" value="X-ray"/>
    <property type="resolution" value="3.60 A"/>
    <property type="chains" value="C=1-318"/>
</dbReference>
<dbReference type="PDB" id="4BXX">
    <property type="method" value="X-ray"/>
    <property type="resolution" value="3.28 A"/>
    <property type="chains" value="C=1-318"/>
</dbReference>
<dbReference type="PDB" id="4BXZ">
    <property type="method" value="X-ray"/>
    <property type="resolution" value="4.80 A"/>
    <property type="chains" value="C=1-318"/>
</dbReference>
<dbReference type="PDB" id="4BY1">
    <property type="method" value="X-ray"/>
    <property type="resolution" value="3.60 A"/>
    <property type="chains" value="C=1-318"/>
</dbReference>
<dbReference type="PDB" id="4BY7">
    <property type="method" value="X-ray"/>
    <property type="resolution" value="3.15 A"/>
    <property type="chains" value="C=1-318"/>
</dbReference>
<dbReference type="PDB" id="4V1M">
    <property type="method" value="EM"/>
    <property type="resolution" value="6.60 A"/>
    <property type="chains" value="C=1-318"/>
</dbReference>
<dbReference type="PDB" id="4V1N">
    <property type="method" value="EM"/>
    <property type="resolution" value="7.80 A"/>
    <property type="chains" value="C=1-318"/>
</dbReference>
<dbReference type="PDB" id="4V1O">
    <property type="method" value="EM"/>
    <property type="resolution" value="9.70 A"/>
    <property type="chains" value="C=1-318"/>
</dbReference>
<dbReference type="PDB" id="4X67">
    <property type="method" value="X-ray"/>
    <property type="resolution" value="4.10 A"/>
    <property type="chains" value="C=1-318"/>
</dbReference>
<dbReference type="PDB" id="4X6A">
    <property type="method" value="X-ray"/>
    <property type="resolution" value="3.96 A"/>
    <property type="chains" value="C=1-318"/>
</dbReference>
<dbReference type="PDB" id="4Y52">
    <property type="method" value="X-ray"/>
    <property type="resolution" value="3.50 A"/>
    <property type="chains" value="C=1-318"/>
</dbReference>
<dbReference type="PDB" id="4Y7N">
    <property type="method" value="X-ray"/>
    <property type="resolution" value="3.30 A"/>
    <property type="chains" value="C=1-318"/>
</dbReference>
<dbReference type="PDB" id="5C3E">
    <property type="method" value="X-ray"/>
    <property type="resolution" value="3.70 A"/>
    <property type="chains" value="C=1-318"/>
</dbReference>
<dbReference type="PDB" id="5C44">
    <property type="method" value="X-ray"/>
    <property type="resolution" value="3.95 A"/>
    <property type="chains" value="C=1-318"/>
</dbReference>
<dbReference type="PDB" id="5C4A">
    <property type="method" value="X-ray"/>
    <property type="resolution" value="4.20 A"/>
    <property type="chains" value="C=1-318"/>
</dbReference>
<dbReference type="PDB" id="5C4J">
    <property type="method" value="X-ray"/>
    <property type="resolution" value="4.00 A"/>
    <property type="chains" value="C=1-318"/>
</dbReference>
<dbReference type="PDB" id="5C4X">
    <property type="method" value="X-ray"/>
    <property type="resolution" value="4.00 A"/>
    <property type="chains" value="C=1-318"/>
</dbReference>
<dbReference type="PDB" id="5FMF">
    <property type="method" value="EM"/>
    <property type="resolution" value="6.00 A"/>
    <property type="chains" value="C=3-268"/>
</dbReference>
<dbReference type="PDB" id="5FYW">
    <property type="method" value="EM"/>
    <property type="resolution" value="4.35 A"/>
    <property type="chains" value="C=1-318"/>
</dbReference>
<dbReference type="PDB" id="5FZ5">
    <property type="method" value="EM"/>
    <property type="resolution" value="8.80 A"/>
    <property type="chains" value="C=1-318"/>
</dbReference>
<dbReference type="PDB" id="5IP7">
    <property type="method" value="X-ray"/>
    <property type="resolution" value="3.52 A"/>
    <property type="chains" value="C=3-268"/>
</dbReference>
<dbReference type="PDB" id="5IP9">
    <property type="method" value="X-ray"/>
    <property type="resolution" value="3.90 A"/>
    <property type="chains" value="C=3-268"/>
</dbReference>
<dbReference type="PDB" id="5OQJ">
    <property type="method" value="EM"/>
    <property type="resolution" value="4.70 A"/>
    <property type="chains" value="C=1-318"/>
</dbReference>
<dbReference type="PDB" id="5OQM">
    <property type="method" value="EM"/>
    <property type="resolution" value="5.80 A"/>
    <property type="chains" value="C=1-318"/>
</dbReference>
<dbReference type="PDB" id="5OT2">
    <property type="method" value="X-ray"/>
    <property type="resolution" value="3.20 A"/>
    <property type="chains" value="C=1-318"/>
</dbReference>
<dbReference type="PDB" id="5SVA">
    <property type="method" value="EM"/>
    <property type="resolution" value="15.30 A"/>
    <property type="chains" value="C=1-318"/>
</dbReference>
<dbReference type="PDB" id="5U5Q">
    <property type="method" value="X-ray"/>
    <property type="resolution" value="3.80 A"/>
    <property type="chains" value="C=1-318"/>
</dbReference>
<dbReference type="PDB" id="5VVR">
    <property type="method" value="EM"/>
    <property type="resolution" value="5.80 A"/>
    <property type="chains" value="C=1-318"/>
</dbReference>
<dbReference type="PDB" id="5VVS">
    <property type="method" value="EM"/>
    <property type="resolution" value="6.40 A"/>
    <property type="chains" value="C=1-318"/>
</dbReference>
<dbReference type="PDB" id="5W4U">
    <property type="method" value="X-ray"/>
    <property type="resolution" value="3.60 A"/>
    <property type="chains" value="C=1-318"/>
</dbReference>
<dbReference type="PDB" id="5W51">
    <property type="method" value="X-ray"/>
    <property type="resolution" value="3.40 A"/>
    <property type="chains" value="C=1-318"/>
</dbReference>
<dbReference type="PDB" id="6BLO">
    <property type="method" value="X-ray"/>
    <property type="resolution" value="3.40 A"/>
    <property type="chains" value="C=1-318"/>
</dbReference>
<dbReference type="PDB" id="6BLP">
    <property type="method" value="X-ray"/>
    <property type="resolution" value="3.20 A"/>
    <property type="chains" value="C=1-318"/>
</dbReference>
<dbReference type="PDB" id="6BM2">
    <property type="method" value="X-ray"/>
    <property type="resolution" value="3.40 A"/>
    <property type="chains" value="C=1-318"/>
</dbReference>
<dbReference type="PDB" id="6BM4">
    <property type="method" value="X-ray"/>
    <property type="resolution" value="2.95 A"/>
    <property type="chains" value="C=1-318"/>
</dbReference>
<dbReference type="PDB" id="6BQF">
    <property type="method" value="X-ray"/>
    <property type="resolution" value="3.35 A"/>
    <property type="chains" value="C=1-318"/>
</dbReference>
<dbReference type="PDB" id="6GYK">
    <property type="method" value="EM"/>
    <property type="resolution" value="5.10 A"/>
    <property type="chains" value="C=1-318"/>
</dbReference>
<dbReference type="PDB" id="6GYL">
    <property type="method" value="EM"/>
    <property type="resolution" value="4.80 A"/>
    <property type="chains" value="C=1-318"/>
</dbReference>
<dbReference type="PDB" id="6GYM">
    <property type="method" value="EM"/>
    <property type="resolution" value="6.70 A"/>
    <property type="chains" value="C=1-318"/>
</dbReference>
<dbReference type="PDB" id="6I84">
    <property type="method" value="EM"/>
    <property type="resolution" value="4.40 A"/>
    <property type="chains" value="C=1-318"/>
</dbReference>
<dbReference type="PDB" id="6O6C">
    <property type="method" value="EM"/>
    <property type="resolution" value="3.10 A"/>
    <property type="chains" value="C=1-318"/>
</dbReference>
<dbReference type="PDB" id="6UPX">
    <property type="method" value="X-ray"/>
    <property type="resolution" value="3.40 A"/>
    <property type="chains" value="C=1-318"/>
</dbReference>
<dbReference type="PDB" id="6UPY">
    <property type="method" value="X-ray"/>
    <property type="resolution" value="3.40 A"/>
    <property type="chains" value="C=1-318"/>
</dbReference>
<dbReference type="PDB" id="6UPZ">
    <property type="method" value="X-ray"/>
    <property type="resolution" value="3.10 A"/>
    <property type="chains" value="C=1-318"/>
</dbReference>
<dbReference type="PDB" id="6UQ0">
    <property type="method" value="X-ray"/>
    <property type="resolution" value="3.56 A"/>
    <property type="chains" value="C=1-318"/>
</dbReference>
<dbReference type="PDB" id="6UQ1">
    <property type="method" value="X-ray"/>
    <property type="resolution" value="3.60 A"/>
    <property type="chains" value="C=1-318"/>
</dbReference>
<dbReference type="PDB" id="6UQ2">
    <property type="method" value="X-ray"/>
    <property type="resolution" value="3.20 A"/>
    <property type="chains" value="C=1-318"/>
</dbReference>
<dbReference type="PDB" id="6UQ3">
    <property type="method" value="X-ray"/>
    <property type="resolution" value="3.47 A"/>
    <property type="chains" value="C=1-318"/>
</dbReference>
<dbReference type="PDB" id="7KED">
    <property type="method" value="X-ray"/>
    <property type="resolution" value="3.60 A"/>
    <property type="chains" value="C=1-318"/>
</dbReference>
<dbReference type="PDB" id="7KEE">
    <property type="method" value="X-ray"/>
    <property type="resolution" value="3.45 A"/>
    <property type="chains" value="C=1-318"/>
</dbReference>
<dbReference type="PDB" id="7KEF">
    <property type="method" value="X-ray"/>
    <property type="resolution" value="3.89 A"/>
    <property type="chains" value="C=1-318"/>
</dbReference>
<dbReference type="PDB" id="7MEI">
    <property type="method" value="EM"/>
    <property type="resolution" value="3.54 A"/>
    <property type="chains" value="C/c=1-318"/>
</dbReference>
<dbReference type="PDB" id="7MK9">
    <property type="method" value="EM"/>
    <property type="resolution" value="3.54 A"/>
    <property type="chains" value="C=1-318"/>
</dbReference>
<dbReference type="PDB" id="7MKA">
    <property type="method" value="EM"/>
    <property type="resolution" value="3.54 A"/>
    <property type="chains" value="c=1-318"/>
</dbReference>
<dbReference type="PDB" id="7ML0">
    <property type="method" value="EM"/>
    <property type="resolution" value="3.00 A"/>
    <property type="chains" value="C=1-318"/>
</dbReference>
<dbReference type="PDB" id="7ML1">
    <property type="method" value="EM"/>
    <property type="resolution" value="4.00 A"/>
    <property type="chains" value="C=1-318"/>
</dbReference>
<dbReference type="PDB" id="7ML2">
    <property type="method" value="EM"/>
    <property type="resolution" value="3.40 A"/>
    <property type="chains" value="C=1-318"/>
</dbReference>
<dbReference type="PDB" id="7ML4">
    <property type="method" value="EM"/>
    <property type="resolution" value="3.10 A"/>
    <property type="chains" value="C=1-318"/>
</dbReference>
<dbReference type="PDB" id="7NKX">
    <property type="method" value="EM"/>
    <property type="resolution" value="2.90 A"/>
    <property type="chains" value="C=1-318"/>
</dbReference>
<dbReference type="PDB" id="7NKY">
    <property type="method" value="EM"/>
    <property type="resolution" value="3.20 A"/>
    <property type="chains" value="C=1-318"/>
</dbReference>
<dbReference type="PDB" id="7O4I">
    <property type="method" value="EM"/>
    <property type="resolution" value="3.20 A"/>
    <property type="chains" value="C=4-318"/>
</dbReference>
<dbReference type="PDB" id="7O4J">
    <property type="method" value="EM"/>
    <property type="resolution" value="2.90 A"/>
    <property type="chains" value="C=4-318"/>
</dbReference>
<dbReference type="PDB" id="7O72">
    <property type="method" value="EM"/>
    <property type="resolution" value="3.40 A"/>
    <property type="chains" value="C=4-318"/>
</dbReference>
<dbReference type="PDB" id="7O73">
    <property type="method" value="EM"/>
    <property type="resolution" value="3.40 A"/>
    <property type="chains" value="C=4-318"/>
</dbReference>
<dbReference type="PDB" id="7O75">
    <property type="method" value="EM"/>
    <property type="resolution" value="3.20 A"/>
    <property type="chains" value="C=4-318"/>
</dbReference>
<dbReference type="PDB" id="7RIM">
    <property type="method" value="X-ray"/>
    <property type="resolution" value="2.90 A"/>
    <property type="chains" value="C=1-318"/>
</dbReference>
<dbReference type="PDB" id="7RIP">
    <property type="method" value="X-ray"/>
    <property type="resolution" value="3.30 A"/>
    <property type="chains" value="C=1-318"/>
</dbReference>
<dbReference type="PDB" id="7RIQ">
    <property type="method" value="X-ray"/>
    <property type="resolution" value="3.00 A"/>
    <property type="chains" value="C=1-318"/>
</dbReference>
<dbReference type="PDB" id="7RIW">
    <property type="method" value="X-ray"/>
    <property type="resolution" value="3.20 A"/>
    <property type="chains" value="C=1-318"/>
</dbReference>
<dbReference type="PDB" id="7RIX">
    <property type="method" value="X-ray"/>
    <property type="resolution" value="3.40 A"/>
    <property type="chains" value="C=1-318"/>
</dbReference>
<dbReference type="PDB" id="7RIY">
    <property type="method" value="X-ray"/>
    <property type="resolution" value="3.70 A"/>
    <property type="chains" value="C=1-318"/>
</dbReference>
<dbReference type="PDB" id="7UI9">
    <property type="method" value="EM"/>
    <property type="resolution" value="3.30 A"/>
    <property type="chains" value="C=1-318"/>
</dbReference>
<dbReference type="PDB" id="7UIF">
    <property type="method" value="EM"/>
    <property type="resolution" value="4.60 A"/>
    <property type="chains" value="C=1-318"/>
</dbReference>
<dbReference type="PDB" id="7UIO">
    <property type="method" value="EM"/>
    <property type="resolution" value="3.30 A"/>
    <property type="chains" value="AC/BC=1-318"/>
</dbReference>
<dbReference type="PDB" id="7ZS9">
    <property type="method" value="EM"/>
    <property type="resolution" value="3.10 A"/>
    <property type="chains" value="C=4-318"/>
</dbReference>
<dbReference type="PDB" id="7ZSA">
    <property type="method" value="EM"/>
    <property type="resolution" value="4.00 A"/>
    <property type="chains" value="C=4-318"/>
</dbReference>
<dbReference type="PDB" id="7ZSB">
    <property type="method" value="EM"/>
    <property type="resolution" value="6.60 A"/>
    <property type="chains" value="C=4-318"/>
</dbReference>
<dbReference type="PDB" id="8CEN">
    <property type="method" value="EM"/>
    <property type="resolution" value="3.00 A"/>
    <property type="chains" value="C=4-318"/>
</dbReference>
<dbReference type="PDB" id="8CEO">
    <property type="method" value="EM"/>
    <property type="resolution" value="3.60 A"/>
    <property type="chains" value="C=4-318"/>
</dbReference>
<dbReference type="PDB" id="8JCH">
    <property type="method" value="EM"/>
    <property type="resolution" value="2.70 A"/>
    <property type="chains" value="C=1-318"/>
</dbReference>
<dbReference type="PDB" id="8K5P">
    <property type="method" value="EM"/>
    <property type="resolution" value="2.80 A"/>
    <property type="chains" value="C=1-318"/>
</dbReference>
<dbReference type="PDB" id="8RAM">
    <property type="method" value="EM"/>
    <property type="resolution" value="2.80 A"/>
    <property type="chains" value="C=1-318"/>
</dbReference>
<dbReference type="PDB" id="8RAP">
    <property type="method" value="EM"/>
    <property type="resolution" value="4.30 A"/>
    <property type="chains" value="C=1-318"/>
</dbReference>
<dbReference type="PDB" id="8TUG">
    <property type="method" value="EM"/>
    <property type="resolution" value="3.50 A"/>
    <property type="chains" value="C=1-318"/>
</dbReference>
<dbReference type="PDB" id="8TVP">
    <property type="method" value="EM"/>
    <property type="resolution" value="3.70 A"/>
    <property type="chains" value="C=1-318"/>
</dbReference>
<dbReference type="PDB" id="8TVQ">
    <property type="method" value="EM"/>
    <property type="resolution" value="4.60 A"/>
    <property type="chains" value="C=1-318"/>
</dbReference>
<dbReference type="PDB" id="8TVS">
    <property type="method" value="EM"/>
    <property type="resolution" value="4.40 A"/>
    <property type="chains" value="C=1-318"/>
</dbReference>
<dbReference type="PDB" id="8TVV">
    <property type="method" value="EM"/>
    <property type="resolution" value="3.70 A"/>
    <property type="chains" value="C=1-318"/>
</dbReference>
<dbReference type="PDB" id="8TVW">
    <property type="method" value="EM"/>
    <property type="resolution" value="3.60 A"/>
    <property type="chains" value="C=1-318"/>
</dbReference>
<dbReference type="PDB" id="8TVX">
    <property type="method" value="EM"/>
    <property type="resolution" value="3.70 A"/>
    <property type="chains" value="C=1-318"/>
</dbReference>
<dbReference type="PDB" id="8TVY">
    <property type="method" value="EM"/>
    <property type="resolution" value="3.10 A"/>
    <property type="chains" value="C=1-318"/>
</dbReference>
<dbReference type="PDB" id="8UKQ">
    <property type="method" value="X-ray"/>
    <property type="resolution" value="3.50 A"/>
    <property type="chains" value="C=1-318"/>
</dbReference>
<dbReference type="PDB" id="8UKR">
    <property type="method" value="X-ray"/>
    <property type="resolution" value="3.78 A"/>
    <property type="chains" value="C=1-318"/>
</dbReference>
<dbReference type="PDB" id="8UKS">
    <property type="method" value="X-ray"/>
    <property type="resolution" value="3.40 A"/>
    <property type="chains" value="C=1-318"/>
</dbReference>
<dbReference type="PDB" id="8UKT">
    <property type="method" value="X-ray"/>
    <property type="resolution" value="3.60 A"/>
    <property type="chains" value="C=1-318"/>
</dbReference>
<dbReference type="PDB" id="8UKU">
    <property type="method" value="X-ray"/>
    <property type="resolution" value="3.60 A"/>
    <property type="chains" value="C=1-318"/>
</dbReference>
<dbReference type="PDB" id="8UMH">
    <property type="method" value="EM"/>
    <property type="resolution" value="4.10 A"/>
    <property type="chains" value="C=1-318"/>
</dbReference>
<dbReference type="PDB" id="8UMI">
    <property type="method" value="EM"/>
    <property type="resolution" value="3.70 A"/>
    <property type="chains" value="C=1-318"/>
</dbReference>
<dbReference type="PDB" id="8UOQ">
    <property type="method" value="EM"/>
    <property type="resolution" value="3.80 A"/>
    <property type="chains" value="C=1-318"/>
</dbReference>
<dbReference type="PDB" id="8UOT">
    <property type="method" value="EM"/>
    <property type="resolution" value="3.70 A"/>
    <property type="chains" value="C=1-318"/>
</dbReference>
<dbReference type="PDB" id="9BVT">
    <property type="method" value="X-ray"/>
    <property type="resolution" value="3.40 A"/>
    <property type="chains" value="C=1-318"/>
</dbReference>
<dbReference type="PDB" id="9BW0">
    <property type="method" value="X-ray"/>
    <property type="resolution" value="3.51 A"/>
    <property type="chains" value="C=1-318"/>
</dbReference>
<dbReference type="PDB" id="9JA1">
    <property type="method" value="EM"/>
    <property type="resolution" value="2.98 A"/>
    <property type="chains" value="C=1-318"/>
</dbReference>
<dbReference type="PDBsum" id="1I3Q"/>
<dbReference type="PDBsum" id="1I50"/>
<dbReference type="PDBsum" id="1I6H"/>
<dbReference type="PDBsum" id="1K83"/>
<dbReference type="PDBsum" id="1NIK"/>
<dbReference type="PDBsum" id="1NT9"/>
<dbReference type="PDBsum" id="1PQV"/>
<dbReference type="PDBsum" id="1R5U"/>
<dbReference type="PDBsum" id="1R9S"/>
<dbReference type="PDBsum" id="1R9T"/>
<dbReference type="PDBsum" id="1SFO"/>
<dbReference type="PDBsum" id="1TWA"/>
<dbReference type="PDBsum" id="1TWC"/>
<dbReference type="PDBsum" id="1TWF"/>
<dbReference type="PDBsum" id="1TWG"/>
<dbReference type="PDBsum" id="1TWH"/>
<dbReference type="PDBsum" id="1WCM"/>
<dbReference type="PDBsum" id="1Y1V"/>
<dbReference type="PDBsum" id="1Y1W"/>
<dbReference type="PDBsum" id="1Y1Y"/>
<dbReference type="PDBsum" id="1Y77"/>
<dbReference type="PDBsum" id="2B63"/>
<dbReference type="PDBsum" id="2B8K"/>
<dbReference type="PDBsum" id="2E2H"/>
<dbReference type="PDBsum" id="2E2I"/>
<dbReference type="PDBsum" id="2E2J"/>
<dbReference type="PDBsum" id="2JA5"/>
<dbReference type="PDBsum" id="2JA6"/>
<dbReference type="PDBsum" id="2JA7"/>
<dbReference type="PDBsum" id="2JA8"/>
<dbReference type="PDBsum" id="2NVQ"/>
<dbReference type="PDBsum" id="2NVT"/>
<dbReference type="PDBsum" id="2NVX"/>
<dbReference type="PDBsum" id="2NVY"/>
<dbReference type="PDBsum" id="2NVZ"/>
<dbReference type="PDBsum" id="2R7Z"/>
<dbReference type="PDBsum" id="2R92"/>
<dbReference type="PDBsum" id="2R93"/>
<dbReference type="PDBsum" id="2VUM"/>
<dbReference type="PDBsum" id="2YU9"/>
<dbReference type="PDBsum" id="3CQZ"/>
<dbReference type="PDBsum" id="3FKI"/>
<dbReference type="PDBsum" id="3GTG"/>
<dbReference type="PDBsum" id="3GTJ"/>
<dbReference type="PDBsum" id="3GTK"/>
<dbReference type="PDBsum" id="3GTL"/>
<dbReference type="PDBsum" id="3GTM"/>
<dbReference type="PDBsum" id="3GTO"/>
<dbReference type="PDBsum" id="3GTP"/>
<dbReference type="PDBsum" id="3GTQ"/>
<dbReference type="PDBsum" id="3H3V"/>
<dbReference type="PDBsum" id="3HOU"/>
<dbReference type="PDBsum" id="3HOV"/>
<dbReference type="PDBsum" id="3HOW"/>
<dbReference type="PDBsum" id="3HOX"/>
<dbReference type="PDBsum" id="3HOY"/>
<dbReference type="PDBsum" id="3HOZ"/>
<dbReference type="PDBsum" id="3I4M"/>
<dbReference type="PDBsum" id="3I4N"/>
<dbReference type="PDBsum" id="3J0K"/>
<dbReference type="PDBsum" id="3J1N"/>
<dbReference type="PDBsum" id="3K1F"/>
<dbReference type="PDBsum" id="3K7A"/>
<dbReference type="PDBsum" id="3M3Y"/>
<dbReference type="PDBsum" id="3M4O"/>
<dbReference type="PDBsum" id="3PO2"/>
<dbReference type="PDBsum" id="3PO3"/>
<dbReference type="PDBsum" id="3QT1"/>
<dbReference type="PDBsum" id="3RZD"/>
<dbReference type="PDBsum" id="3RZO"/>
<dbReference type="PDBsum" id="3S14"/>
<dbReference type="PDBsum" id="3S15"/>
<dbReference type="PDBsum" id="3S16"/>
<dbReference type="PDBsum" id="3S17"/>
<dbReference type="PDBsum" id="3S1M"/>
<dbReference type="PDBsum" id="3S1N"/>
<dbReference type="PDBsum" id="3S1Q"/>
<dbReference type="PDBsum" id="3S1R"/>
<dbReference type="PDBsum" id="3S2D"/>
<dbReference type="PDBsum" id="3S2H"/>
<dbReference type="PDBsum" id="4A3B"/>
<dbReference type="PDBsum" id="4A3C"/>
<dbReference type="PDBsum" id="4A3D"/>
<dbReference type="PDBsum" id="4A3E"/>
<dbReference type="PDBsum" id="4A3F"/>
<dbReference type="PDBsum" id="4A3G"/>
<dbReference type="PDBsum" id="4A3I"/>
<dbReference type="PDBsum" id="4A3J"/>
<dbReference type="PDBsum" id="4A3K"/>
<dbReference type="PDBsum" id="4A3L"/>
<dbReference type="PDBsum" id="4A3M"/>
<dbReference type="PDBsum" id="4A93"/>
<dbReference type="PDBsum" id="4BBR"/>
<dbReference type="PDBsum" id="4BBS"/>
<dbReference type="PDBsum" id="4BXX"/>
<dbReference type="PDBsum" id="4BXZ"/>
<dbReference type="PDBsum" id="4BY1"/>
<dbReference type="PDBsum" id="4BY7"/>
<dbReference type="PDBsum" id="4V1M"/>
<dbReference type="PDBsum" id="4V1N"/>
<dbReference type="PDBsum" id="4V1O"/>
<dbReference type="PDBsum" id="4X67"/>
<dbReference type="PDBsum" id="4X6A"/>
<dbReference type="PDBsum" id="4Y52"/>
<dbReference type="PDBsum" id="4Y7N"/>
<dbReference type="PDBsum" id="5C3E"/>
<dbReference type="PDBsum" id="5C44"/>
<dbReference type="PDBsum" id="5C4A"/>
<dbReference type="PDBsum" id="5C4J"/>
<dbReference type="PDBsum" id="5C4X"/>
<dbReference type="PDBsum" id="5FMF"/>
<dbReference type="PDBsum" id="5FYW"/>
<dbReference type="PDBsum" id="5FZ5"/>
<dbReference type="PDBsum" id="5IP7"/>
<dbReference type="PDBsum" id="5IP9"/>
<dbReference type="PDBsum" id="5OQJ"/>
<dbReference type="PDBsum" id="5OQM"/>
<dbReference type="PDBsum" id="5OT2"/>
<dbReference type="PDBsum" id="5SVA"/>
<dbReference type="PDBsum" id="5U5Q"/>
<dbReference type="PDBsum" id="5VVR"/>
<dbReference type="PDBsum" id="5VVS"/>
<dbReference type="PDBsum" id="5W4U"/>
<dbReference type="PDBsum" id="5W51"/>
<dbReference type="PDBsum" id="6BLO"/>
<dbReference type="PDBsum" id="6BLP"/>
<dbReference type="PDBsum" id="6BM2"/>
<dbReference type="PDBsum" id="6BM4"/>
<dbReference type="PDBsum" id="6BQF"/>
<dbReference type="PDBsum" id="6GYK"/>
<dbReference type="PDBsum" id="6GYL"/>
<dbReference type="PDBsum" id="6GYM"/>
<dbReference type="PDBsum" id="6I84"/>
<dbReference type="PDBsum" id="6O6C"/>
<dbReference type="PDBsum" id="6UPX"/>
<dbReference type="PDBsum" id="6UPY"/>
<dbReference type="PDBsum" id="6UPZ"/>
<dbReference type="PDBsum" id="6UQ0"/>
<dbReference type="PDBsum" id="6UQ1"/>
<dbReference type="PDBsum" id="6UQ2"/>
<dbReference type="PDBsum" id="6UQ3"/>
<dbReference type="PDBsum" id="7KED"/>
<dbReference type="PDBsum" id="7KEE"/>
<dbReference type="PDBsum" id="7KEF"/>
<dbReference type="PDBsum" id="7MEI"/>
<dbReference type="PDBsum" id="7MK9"/>
<dbReference type="PDBsum" id="7MKA"/>
<dbReference type="PDBsum" id="7ML0"/>
<dbReference type="PDBsum" id="7ML1"/>
<dbReference type="PDBsum" id="7ML2"/>
<dbReference type="PDBsum" id="7ML4"/>
<dbReference type="PDBsum" id="7NKX"/>
<dbReference type="PDBsum" id="7NKY"/>
<dbReference type="PDBsum" id="7O4I"/>
<dbReference type="PDBsum" id="7O4J"/>
<dbReference type="PDBsum" id="7O72"/>
<dbReference type="PDBsum" id="7O73"/>
<dbReference type="PDBsum" id="7O75"/>
<dbReference type="PDBsum" id="7RIM"/>
<dbReference type="PDBsum" id="7RIP"/>
<dbReference type="PDBsum" id="7RIQ"/>
<dbReference type="PDBsum" id="7RIW"/>
<dbReference type="PDBsum" id="7RIX"/>
<dbReference type="PDBsum" id="7RIY"/>
<dbReference type="PDBsum" id="7UI9"/>
<dbReference type="PDBsum" id="7UIF"/>
<dbReference type="PDBsum" id="7UIO"/>
<dbReference type="PDBsum" id="7ZS9"/>
<dbReference type="PDBsum" id="7ZSA"/>
<dbReference type="PDBsum" id="7ZSB"/>
<dbReference type="PDBsum" id="8CEN"/>
<dbReference type="PDBsum" id="8CEO"/>
<dbReference type="PDBsum" id="8JCH"/>
<dbReference type="PDBsum" id="8K5P"/>
<dbReference type="PDBsum" id="8RAM"/>
<dbReference type="PDBsum" id="8RAP"/>
<dbReference type="PDBsum" id="8TUG"/>
<dbReference type="PDBsum" id="8TVP"/>
<dbReference type="PDBsum" id="8TVQ"/>
<dbReference type="PDBsum" id="8TVS"/>
<dbReference type="PDBsum" id="8TVV"/>
<dbReference type="PDBsum" id="8TVW"/>
<dbReference type="PDBsum" id="8TVX"/>
<dbReference type="PDBsum" id="8TVY"/>
<dbReference type="PDBsum" id="8UKQ"/>
<dbReference type="PDBsum" id="8UKR"/>
<dbReference type="PDBsum" id="8UKS"/>
<dbReference type="PDBsum" id="8UKT"/>
<dbReference type="PDBsum" id="8UKU"/>
<dbReference type="PDBsum" id="8UMH"/>
<dbReference type="PDBsum" id="8UMI"/>
<dbReference type="PDBsum" id="8UOQ"/>
<dbReference type="PDBsum" id="8UOT"/>
<dbReference type="PDBsum" id="9BVT"/>
<dbReference type="PDBsum" id="9BW0"/>
<dbReference type="PDBsum" id="9JA1"/>
<dbReference type="EMDB" id="EMD-0090"/>
<dbReference type="EMDB" id="EMD-0091"/>
<dbReference type="EMDB" id="EMD-0092"/>
<dbReference type="EMDB" id="EMD-0633"/>
<dbReference type="EMDB" id="EMD-12449"/>
<dbReference type="EMDB" id="EMD-12450"/>
<dbReference type="EMDB" id="EMD-12719"/>
<dbReference type="EMDB" id="EMD-12720"/>
<dbReference type="EMDB" id="EMD-12743"/>
<dbReference type="EMDB" id="EMD-12744"/>
<dbReference type="EMDB" id="EMD-12745"/>
<dbReference type="EMDB" id="EMD-14927"/>
<dbReference type="EMDB" id="EMD-14928"/>
<dbReference type="EMDB" id="EMD-14929"/>
<dbReference type="EMDB" id="EMD-16610"/>
<dbReference type="EMDB" id="EMD-16611"/>
<dbReference type="EMDB" id="EMD-19019"/>
<dbReference type="EMDB" id="EMD-19022"/>
<dbReference type="EMDB" id="EMD-26542"/>
<dbReference type="EMDB" id="EMD-26544"/>
<dbReference type="EMDB" id="EMD-26551"/>
<dbReference type="EMDB" id="EMD-2784"/>
<dbReference type="EMDB" id="EMD-2785"/>
<dbReference type="EMDB" id="EMD-2786"/>
<dbReference type="EMDB" id="EMD-36162"/>
<dbReference type="EMDB" id="EMD-36908"/>
<dbReference type="EMDB" id="EMD-3846"/>
<dbReference type="EMDB" id="EMD-3850"/>
<dbReference type="EMDB" id="EMD-42437"/>
<dbReference type="EMDB" id="EMD-42438"/>
<dbReference type="EMDB" id="EMD-4429"/>
<dbReference type="EMDB" id="EMD-61287"/>
<dbReference type="EMDB" id="EMD-8305"/>
<dbReference type="EMDB" id="EMD-8735"/>
<dbReference type="EMDB" id="EMD-8737"/>
<dbReference type="SMR" id="P16370"/>
<dbReference type="BioGRID" id="34967">
    <property type="interactions" value="911"/>
</dbReference>
<dbReference type="ComplexPortal" id="CPX-2662">
    <property type="entry name" value="DNA-directed RNA polymerase II complex"/>
</dbReference>
<dbReference type="DIP" id="DIP-837N"/>
<dbReference type="FunCoup" id="P16370">
    <property type="interactions" value="1209"/>
</dbReference>
<dbReference type="IntAct" id="P16370">
    <property type="interactions" value="64"/>
</dbReference>
<dbReference type="MINT" id="P16370"/>
<dbReference type="STRING" id="4932.YIL021W"/>
<dbReference type="iPTMnet" id="P16370"/>
<dbReference type="PaxDb" id="4932-YIL021W"/>
<dbReference type="PeptideAtlas" id="P16370"/>
<dbReference type="EnsemblFungi" id="YIL021W_mRNA">
    <property type="protein sequence ID" value="YIL021W"/>
    <property type="gene ID" value="YIL021W"/>
</dbReference>
<dbReference type="GeneID" id="854791"/>
<dbReference type="KEGG" id="sce:YIL021W"/>
<dbReference type="AGR" id="SGD:S000001283"/>
<dbReference type="SGD" id="S000001283">
    <property type="gene designation" value="RPB3"/>
</dbReference>
<dbReference type="VEuPathDB" id="FungiDB:YIL021W"/>
<dbReference type="eggNOG" id="KOG1522">
    <property type="taxonomic scope" value="Eukaryota"/>
</dbReference>
<dbReference type="GeneTree" id="ENSGT00950000183100"/>
<dbReference type="HOGENOM" id="CLU_038421_1_1_1"/>
<dbReference type="InParanoid" id="P16370"/>
<dbReference type="OMA" id="FYFEVES"/>
<dbReference type="OrthoDB" id="270173at2759"/>
<dbReference type="BioCyc" id="YEAST:G3O-31296-MONOMER"/>
<dbReference type="Reactome" id="R-SCE-113418">
    <property type="pathway name" value="Formation of the Early Elongation Complex"/>
</dbReference>
<dbReference type="Reactome" id="R-SCE-674695">
    <property type="pathway name" value="RNA Polymerase II Pre-transcription Events"/>
</dbReference>
<dbReference type="Reactome" id="R-SCE-6781823">
    <property type="pathway name" value="Formation of TC-NER Pre-Incision Complex"/>
</dbReference>
<dbReference type="Reactome" id="R-SCE-6782135">
    <property type="pathway name" value="Dual incision in TC-NER"/>
</dbReference>
<dbReference type="Reactome" id="R-SCE-6782210">
    <property type="pathway name" value="Gap-filling DNA repair synthesis and ligation in TC-NER"/>
</dbReference>
<dbReference type="Reactome" id="R-SCE-6796648">
    <property type="pathway name" value="TP53 Regulates Transcription of DNA Repair Genes"/>
</dbReference>
<dbReference type="Reactome" id="R-SCE-6807505">
    <property type="pathway name" value="RNA polymerase II transcribes snRNA genes"/>
</dbReference>
<dbReference type="Reactome" id="R-SCE-72086">
    <property type="pathway name" value="mRNA Capping"/>
</dbReference>
<dbReference type="Reactome" id="R-SCE-72203">
    <property type="pathway name" value="Processing of Capped Intron-Containing Pre-mRNA"/>
</dbReference>
<dbReference type="Reactome" id="R-SCE-73776">
    <property type="pathway name" value="RNA Polymerase II Promoter Escape"/>
</dbReference>
<dbReference type="Reactome" id="R-SCE-73779">
    <property type="pathway name" value="RNA Polymerase II Transcription Pre-Initiation And Promoter Opening"/>
</dbReference>
<dbReference type="Reactome" id="R-SCE-75953">
    <property type="pathway name" value="RNA Polymerase II Transcription Initiation"/>
</dbReference>
<dbReference type="Reactome" id="R-SCE-76042">
    <property type="pathway name" value="RNA Polymerase II Transcription Initiation And Promoter Clearance"/>
</dbReference>
<dbReference type="Reactome" id="R-SCE-77075">
    <property type="pathway name" value="RNA Pol II CTD phosphorylation and interaction with CE"/>
</dbReference>
<dbReference type="Reactome" id="R-SCE-9018519">
    <property type="pathway name" value="Estrogen-dependent gene expression"/>
</dbReference>
<dbReference type="BioGRID-ORCS" id="854791">
    <property type="hits" value="2 hits in 10 CRISPR screens"/>
</dbReference>
<dbReference type="EvolutionaryTrace" id="P16370"/>
<dbReference type="PRO" id="PR:P16370"/>
<dbReference type="Proteomes" id="UP000002311">
    <property type="component" value="Chromosome IX"/>
</dbReference>
<dbReference type="RNAct" id="P16370">
    <property type="molecule type" value="protein"/>
</dbReference>
<dbReference type="GO" id="GO:0005654">
    <property type="term" value="C:nucleoplasm"/>
    <property type="evidence" value="ECO:0000314"/>
    <property type="project" value="SGD"/>
</dbReference>
<dbReference type="GO" id="GO:0005634">
    <property type="term" value="C:nucleus"/>
    <property type="evidence" value="ECO:0000303"/>
    <property type="project" value="ComplexPortal"/>
</dbReference>
<dbReference type="GO" id="GO:0005665">
    <property type="term" value="C:RNA polymerase II, core complex"/>
    <property type="evidence" value="ECO:0000314"/>
    <property type="project" value="SGD"/>
</dbReference>
<dbReference type="GO" id="GO:0003677">
    <property type="term" value="F:DNA binding"/>
    <property type="evidence" value="ECO:0007669"/>
    <property type="project" value="InterPro"/>
</dbReference>
<dbReference type="GO" id="GO:0003899">
    <property type="term" value="F:DNA-directed RNA polymerase activity"/>
    <property type="evidence" value="ECO:0007669"/>
    <property type="project" value="InterPro"/>
</dbReference>
<dbReference type="GO" id="GO:0046872">
    <property type="term" value="F:metal ion binding"/>
    <property type="evidence" value="ECO:0007669"/>
    <property type="project" value="UniProtKB-KW"/>
</dbReference>
<dbReference type="GO" id="GO:0046983">
    <property type="term" value="F:protein dimerization activity"/>
    <property type="evidence" value="ECO:0007669"/>
    <property type="project" value="InterPro"/>
</dbReference>
<dbReference type="GO" id="GO:0001172">
    <property type="term" value="P:RNA-templated transcription"/>
    <property type="evidence" value="ECO:0007669"/>
    <property type="project" value="GOC"/>
</dbReference>
<dbReference type="GO" id="GO:0006369">
    <property type="term" value="P:termination of RNA polymerase II transcription"/>
    <property type="evidence" value="ECO:0000315"/>
    <property type="project" value="SGD"/>
</dbReference>
<dbReference type="GO" id="GO:0006366">
    <property type="term" value="P:transcription by RNA polymerase II"/>
    <property type="evidence" value="ECO:0000315"/>
    <property type="project" value="SGD"/>
</dbReference>
<dbReference type="GO" id="GO:0006368">
    <property type="term" value="P:transcription elongation by RNA polymerase II"/>
    <property type="evidence" value="ECO:0000314"/>
    <property type="project" value="ComplexPortal"/>
</dbReference>
<dbReference type="GO" id="GO:0006367">
    <property type="term" value="P:transcription initiation at RNA polymerase II promoter"/>
    <property type="evidence" value="ECO:0000314"/>
    <property type="project" value="ComplexPortal"/>
</dbReference>
<dbReference type="CDD" id="cd07031">
    <property type="entry name" value="RNAP_II_RPB3"/>
    <property type="match status" value="1"/>
</dbReference>
<dbReference type="FunFam" id="2.170.120.12:FF:000002">
    <property type="entry name" value="DNA-directed RNA polymerase II subunit RPB3"/>
    <property type="match status" value="1"/>
</dbReference>
<dbReference type="FunFam" id="3.30.1360.10:FF:000004">
    <property type="entry name" value="DNA-directed RNA polymerase II subunit RPB3"/>
    <property type="match status" value="1"/>
</dbReference>
<dbReference type="Gene3D" id="2.170.120.12">
    <property type="entry name" value="DNA-directed RNA polymerase, insert domain"/>
    <property type="match status" value="1"/>
</dbReference>
<dbReference type="Gene3D" id="3.30.1360.10">
    <property type="entry name" value="RNA polymerase, RBP11-like subunit"/>
    <property type="match status" value="1"/>
</dbReference>
<dbReference type="HAMAP" id="MF_00320">
    <property type="entry name" value="RNApol_arch_Rpo3"/>
    <property type="match status" value="1"/>
</dbReference>
<dbReference type="InterPro" id="IPR001514">
    <property type="entry name" value="DNA-dir_RNA_pol_30-40kDasu_CS"/>
</dbReference>
<dbReference type="InterPro" id="IPR011262">
    <property type="entry name" value="DNA-dir_RNA_pol_insert"/>
</dbReference>
<dbReference type="InterPro" id="IPR011263">
    <property type="entry name" value="DNA-dir_RNA_pol_RpoA/D/Rpb3"/>
</dbReference>
<dbReference type="InterPro" id="IPR036603">
    <property type="entry name" value="RBP11-like"/>
</dbReference>
<dbReference type="InterPro" id="IPR022842">
    <property type="entry name" value="RNAP_Rpo3/Rpb3/RPAC1"/>
</dbReference>
<dbReference type="InterPro" id="IPR036643">
    <property type="entry name" value="RNApol_insert_sf"/>
</dbReference>
<dbReference type="InterPro" id="IPR050518">
    <property type="entry name" value="Rpo3/RPB3_RNA_Pol_subunit"/>
</dbReference>
<dbReference type="NCBIfam" id="NF001988">
    <property type="entry name" value="PRK00783.1"/>
    <property type="match status" value="1"/>
</dbReference>
<dbReference type="PANTHER" id="PTHR11800">
    <property type="entry name" value="DNA-DIRECTED RNA POLYMERASE"/>
    <property type="match status" value="1"/>
</dbReference>
<dbReference type="PANTHER" id="PTHR11800:SF2">
    <property type="entry name" value="DNA-DIRECTED RNA POLYMERASE II SUBUNIT RPB3"/>
    <property type="match status" value="1"/>
</dbReference>
<dbReference type="Pfam" id="PF01000">
    <property type="entry name" value="RNA_pol_A_bac"/>
    <property type="match status" value="1"/>
</dbReference>
<dbReference type="Pfam" id="PF01193">
    <property type="entry name" value="RNA_pol_L"/>
    <property type="match status" value="1"/>
</dbReference>
<dbReference type="SMART" id="SM00662">
    <property type="entry name" value="RPOLD"/>
    <property type="match status" value="1"/>
</dbReference>
<dbReference type="SUPFAM" id="SSF56553">
    <property type="entry name" value="Insert subdomain of RNA polymerase alpha subunit"/>
    <property type="match status" value="1"/>
</dbReference>
<dbReference type="SUPFAM" id="SSF55257">
    <property type="entry name" value="RBP11-like subunits of RNA polymerase"/>
    <property type="match status" value="1"/>
</dbReference>
<dbReference type="PROSITE" id="PS00446">
    <property type="entry name" value="RNA_POL_D_30KD"/>
    <property type="match status" value="1"/>
</dbReference>
<sequence length="318" mass="35298">MSEEGPQVKIREASKDNVDFILSNVDLAMANSLRRVMIAEIPTLAIDSVEVETNTTVLADEFIAHRLGLIPLQSMDIEQLEYSRDCFCEDHCDKCSVVLTLQAFGESESTTNVYSKDLVIVSNLMGRNIGHPIIQDKEGNGVLICKLRKGQELKLTCVAKKGIAKEHAKWGPAAAIEFEYDPWNKLKHTDYWYEQDSAKEWPQSKNCEYEDPPNEGDPFDYKAQADTFYMNVESVGSIPVDQVVVRGIDTLQKKVASILLALTQMDQDKVNFASGDNNTASNMLGSNEDVMMTGAEQDPYSNASQMGNTGSGGYDNAW</sequence>
<protein>
    <recommendedName>
        <fullName>DNA-directed RNA polymerase II subunit RPB3</fullName>
        <shortName>RNA polymerase II subunit 3</shortName>
        <shortName>RNA polymerase II subunit B3</shortName>
    </recommendedName>
    <alternativeName>
        <fullName>B44.5</fullName>
    </alternativeName>
    <alternativeName>
        <fullName>DNA-directed RNA polymerase II 45 kDa polypeptide</fullName>
    </alternativeName>
</protein>
<organism>
    <name type="scientific">Saccharomyces cerevisiae (strain ATCC 204508 / S288c)</name>
    <name type="common">Baker's yeast</name>
    <dbReference type="NCBI Taxonomy" id="559292"/>
    <lineage>
        <taxon>Eukaryota</taxon>
        <taxon>Fungi</taxon>
        <taxon>Dikarya</taxon>
        <taxon>Ascomycota</taxon>
        <taxon>Saccharomycotina</taxon>
        <taxon>Saccharomycetes</taxon>
        <taxon>Saccharomycetales</taxon>
        <taxon>Saccharomycetaceae</taxon>
        <taxon>Saccharomyces</taxon>
    </lineage>
</organism>